<keyword id="KW-0030">Aminoacyl-tRNA synthetase</keyword>
<keyword id="KW-0067">ATP-binding</keyword>
<keyword id="KW-0963">Cytoplasm</keyword>
<keyword id="KW-0436">Ligase</keyword>
<keyword id="KW-0547">Nucleotide-binding</keyword>
<keyword id="KW-0648">Protein biosynthesis</keyword>
<comment type="catalytic activity">
    <reaction evidence="1">
        <text>tRNA(Gln) + L-glutamine + ATP = L-glutaminyl-tRNA(Gln) + AMP + diphosphate</text>
        <dbReference type="Rhea" id="RHEA:20121"/>
        <dbReference type="Rhea" id="RHEA-COMP:9662"/>
        <dbReference type="Rhea" id="RHEA-COMP:9681"/>
        <dbReference type="ChEBI" id="CHEBI:30616"/>
        <dbReference type="ChEBI" id="CHEBI:33019"/>
        <dbReference type="ChEBI" id="CHEBI:58359"/>
        <dbReference type="ChEBI" id="CHEBI:78442"/>
        <dbReference type="ChEBI" id="CHEBI:78521"/>
        <dbReference type="ChEBI" id="CHEBI:456215"/>
        <dbReference type="EC" id="6.1.1.18"/>
    </reaction>
</comment>
<comment type="subunit">
    <text evidence="1">Monomer.</text>
</comment>
<comment type="subcellular location">
    <subcellularLocation>
        <location evidence="1">Cytoplasm</location>
    </subcellularLocation>
</comment>
<comment type="similarity">
    <text evidence="1">Belongs to the class-I aminoacyl-tRNA synthetase family.</text>
</comment>
<name>SYQ_ECTM1</name>
<protein>
    <recommendedName>
        <fullName evidence="1">Glutamine--tRNA ligase</fullName>
        <ecNumber evidence="1">6.1.1.18</ecNumber>
    </recommendedName>
    <alternativeName>
        <fullName evidence="1">Glutaminyl-tRNA synthetase</fullName>
        <shortName evidence="1">GlnRS</shortName>
    </alternativeName>
</protein>
<evidence type="ECO:0000255" key="1">
    <source>
        <dbReference type="HAMAP-Rule" id="MF_00126"/>
    </source>
</evidence>
<sequence>MSKPTVEKAANFLRPIVQADLDSGKHAKIVTRFPPEPNGYLHIGHAKSICLNFGLAEEFGGQCNLRFDDTNPAKEDQEYIDAIKADVEWLGFKWAGEERYASDYFDQLHAWAVELIKAGKAFVCDLNAEEMRTYRGSLTEPGKNSPFRDRSVEENLDLFARMKAGEFPDGARSLRAKIDMASPNINLRDPILYRIRHAHHHQTGDKWCIYPSYDFTHGQSDAIEGITHSICTLEFEDHRPLYEWFLENLPVPAQPRQYEFARLNLNYTITSKRKLKQLVDEGHVQGWDDPRMSTLSGYRRRGYTPASIRAFCDMIGVNRAGGVVDIGMLEFAIREDLDANAARAMCVLKPLKVVITNYPEGKVENLELPRHPKQDMGVRVLPFSREIYIDASDFEETPPDGFKRLIPGGEVRLRGSYVIRADEAIKDAAGNIVELRCSYDENTLGKNPEGRKVKGVIHWVPAAESVECEVRLYDRLFRSANPEKSEEGGSFLDNINPDSLVVLTGCRAEPSLAQAAPEERFQFEREGYFVADLKDSQPGKPVFNRTVTLRDSWGQ</sequence>
<reference key="1">
    <citation type="submission" date="2007-04" db="EMBL/GenBank/DDBJ databases">
        <title>Complete sequence of Pseudomonas mendocina ymp.</title>
        <authorList>
            <consortium name="US DOE Joint Genome Institute"/>
            <person name="Copeland A."/>
            <person name="Lucas S."/>
            <person name="Lapidus A."/>
            <person name="Barry K."/>
            <person name="Glavina del Rio T."/>
            <person name="Dalin E."/>
            <person name="Tice H."/>
            <person name="Pitluck S."/>
            <person name="Kiss H."/>
            <person name="Brettin T."/>
            <person name="Detter J.C."/>
            <person name="Bruce D."/>
            <person name="Han C."/>
            <person name="Schmutz J."/>
            <person name="Larimer F."/>
            <person name="Land M."/>
            <person name="Hauser L."/>
            <person name="Kyrpides N."/>
            <person name="Mikhailova N."/>
            <person name="Hersman L."/>
            <person name="Dubois J."/>
            <person name="Maurice P."/>
            <person name="Richardson P."/>
        </authorList>
    </citation>
    <scope>NUCLEOTIDE SEQUENCE [LARGE SCALE GENOMIC DNA]</scope>
    <source>
        <strain>ymp</strain>
    </source>
</reference>
<accession>A4XVG2</accession>
<dbReference type="EC" id="6.1.1.18" evidence="1"/>
<dbReference type="EMBL" id="CP000680">
    <property type="protein sequence ID" value="ABP85328.1"/>
    <property type="molecule type" value="Genomic_DNA"/>
</dbReference>
<dbReference type="SMR" id="A4XVG2"/>
<dbReference type="STRING" id="399739.Pmen_2572"/>
<dbReference type="KEGG" id="pmy:Pmen_2572"/>
<dbReference type="PATRIC" id="fig|399739.8.peg.2598"/>
<dbReference type="eggNOG" id="COG0008">
    <property type="taxonomic scope" value="Bacteria"/>
</dbReference>
<dbReference type="HOGENOM" id="CLU_001882_2_3_6"/>
<dbReference type="OrthoDB" id="9801560at2"/>
<dbReference type="GO" id="GO:0005829">
    <property type="term" value="C:cytosol"/>
    <property type="evidence" value="ECO:0007669"/>
    <property type="project" value="TreeGrafter"/>
</dbReference>
<dbReference type="GO" id="GO:0005524">
    <property type="term" value="F:ATP binding"/>
    <property type="evidence" value="ECO:0007669"/>
    <property type="project" value="UniProtKB-UniRule"/>
</dbReference>
<dbReference type="GO" id="GO:0004819">
    <property type="term" value="F:glutamine-tRNA ligase activity"/>
    <property type="evidence" value="ECO:0007669"/>
    <property type="project" value="UniProtKB-UniRule"/>
</dbReference>
<dbReference type="GO" id="GO:0006425">
    <property type="term" value="P:glutaminyl-tRNA aminoacylation"/>
    <property type="evidence" value="ECO:0007669"/>
    <property type="project" value="InterPro"/>
</dbReference>
<dbReference type="GO" id="GO:0006424">
    <property type="term" value="P:glutamyl-tRNA aminoacylation"/>
    <property type="evidence" value="ECO:0007669"/>
    <property type="project" value="UniProtKB-UniRule"/>
</dbReference>
<dbReference type="CDD" id="cd00807">
    <property type="entry name" value="GlnRS_core"/>
    <property type="match status" value="1"/>
</dbReference>
<dbReference type="FunFam" id="1.10.1160.10:FF:000001">
    <property type="entry name" value="Glutamine--tRNA ligase"/>
    <property type="match status" value="1"/>
</dbReference>
<dbReference type="FunFam" id="2.40.240.10:FF:000001">
    <property type="entry name" value="Glutamine--tRNA ligase"/>
    <property type="match status" value="1"/>
</dbReference>
<dbReference type="FunFam" id="3.90.800.10:FF:000001">
    <property type="entry name" value="Glutamine--tRNA ligase"/>
    <property type="match status" value="1"/>
</dbReference>
<dbReference type="FunFam" id="3.40.50.620:FF:000037">
    <property type="entry name" value="Glutamine--tRNA ligase cytoplasmic"/>
    <property type="match status" value="1"/>
</dbReference>
<dbReference type="Gene3D" id="1.10.1160.10">
    <property type="entry name" value="Glutamyl-trna Synthetase, Domain 2"/>
    <property type="match status" value="1"/>
</dbReference>
<dbReference type="Gene3D" id="3.90.800.10">
    <property type="entry name" value="Glutamyl-tRNA Synthetase, Domain 3"/>
    <property type="match status" value="1"/>
</dbReference>
<dbReference type="Gene3D" id="3.40.50.620">
    <property type="entry name" value="HUPs"/>
    <property type="match status" value="1"/>
</dbReference>
<dbReference type="Gene3D" id="2.40.240.10">
    <property type="entry name" value="Ribosomal Protein L25, Chain P"/>
    <property type="match status" value="2"/>
</dbReference>
<dbReference type="HAMAP" id="MF_00126">
    <property type="entry name" value="Gln_tRNA_synth"/>
    <property type="match status" value="1"/>
</dbReference>
<dbReference type="InterPro" id="IPR001412">
    <property type="entry name" value="aa-tRNA-synth_I_CS"/>
</dbReference>
<dbReference type="InterPro" id="IPR004514">
    <property type="entry name" value="Gln-tRNA-synth"/>
</dbReference>
<dbReference type="InterPro" id="IPR050132">
    <property type="entry name" value="Gln/Glu-tRNA_Ligase"/>
</dbReference>
<dbReference type="InterPro" id="IPR022861">
    <property type="entry name" value="Gln_tRNA_ligase_bac"/>
</dbReference>
<dbReference type="InterPro" id="IPR000924">
    <property type="entry name" value="Glu/Gln-tRNA-synth"/>
</dbReference>
<dbReference type="InterPro" id="IPR020058">
    <property type="entry name" value="Glu/Gln-tRNA-synth_Ib_cat-dom"/>
</dbReference>
<dbReference type="InterPro" id="IPR020059">
    <property type="entry name" value="Glu/Gln-tRNA-synth_Ib_codon-bd"/>
</dbReference>
<dbReference type="InterPro" id="IPR020061">
    <property type="entry name" value="Glu_tRNA_lig_a-bdl"/>
</dbReference>
<dbReference type="InterPro" id="IPR020056">
    <property type="entry name" value="Rbsml_bL25/Gln-tRNA_synth_N"/>
</dbReference>
<dbReference type="InterPro" id="IPR011035">
    <property type="entry name" value="Ribosomal_bL25/Gln-tRNA_synth"/>
</dbReference>
<dbReference type="InterPro" id="IPR014729">
    <property type="entry name" value="Rossmann-like_a/b/a_fold"/>
</dbReference>
<dbReference type="InterPro" id="IPR049437">
    <property type="entry name" value="tRNA-synt_1c_C2"/>
</dbReference>
<dbReference type="NCBIfam" id="TIGR00440">
    <property type="entry name" value="glnS"/>
    <property type="match status" value="1"/>
</dbReference>
<dbReference type="NCBIfam" id="NF011291">
    <property type="entry name" value="PRK14703.1"/>
    <property type="match status" value="1"/>
</dbReference>
<dbReference type="PANTHER" id="PTHR43097:SF5">
    <property type="entry name" value="GLUTAMATE--TRNA LIGASE"/>
    <property type="match status" value="1"/>
</dbReference>
<dbReference type="PANTHER" id="PTHR43097">
    <property type="entry name" value="GLUTAMINE-TRNA LIGASE"/>
    <property type="match status" value="1"/>
</dbReference>
<dbReference type="Pfam" id="PF00749">
    <property type="entry name" value="tRNA-synt_1c"/>
    <property type="match status" value="1"/>
</dbReference>
<dbReference type="Pfam" id="PF03950">
    <property type="entry name" value="tRNA-synt_1c_C"/>
    <property type="match status" value="1"/>
</dbReference>
<dbReference type="Pfam" id="PF20974">
    <property type="entry name" value="tRNA-synt_1c_C2"/>
    <property type="match status" value="1"/>
</dbReference>
<dbReference type="PRINTS" id="PR00987">
    <property type="entry name" value="TRNASYNTHGLU"/>
</dbReference>
<dbReference type="SUPFAM" id="SSF52374">
    <property type="entry name" value="Nucleotidylyl transferase"/>
    <property type="match status" value="1"/>
</dbReference>
<dbReference type="SUPFAM" id="SSF50715">
    <property type="entry name" value="Ribosomal protein L25-like"/>
    <property type="match status" value="1"/>
</dbReference>
<dbReference type="PROSITE" id="PS00178">
    <property type="entry name" value="AA_TRNA_LIGASE_I"/>
    <property type="match status" value="1"/>
</dbReference>
<feature type="chain" id="PRO_1000095502" description="Glutamine--tRNA ligase">
    <location>
        <begin position="1"/>
        <end position="555"/>
    </location>
</feature>
<feature type="short sequence motif" description="'HIGH' region" evidence="1">
    <location>
        <begin position="35"/>
        <end position="45"/>
    </location>
</feature>
<feature type="short sequence motif" description="'KMSKS' region" evidence="1">
    <location>
        <begin position="269"/>
        <end position="273"/>
    </location>
</feature>
<feature type="binding site" evidence="1">
    <location>
        <begin position="36"/>
        <end position="38"/>
    </location>
    <ligand>
        <name>ATP</name>
        <dbReference type="ChEBI" id="CHEBI:30616"/>
    </ligand>
</feature>
<feature type="binding site" evidence="1">
    <location>
        <begin position="42"/>
        <end position="48"/>
    </location>
    <ligand>
        <name>ATP</name>
        <dbReference type="ChEBI" id="CHEBI:30616"/>
    </ligand>
</feature>
<feature type="binding site" evidence="1">
    <location>
        <position position="68"/>
    </location>
    <ligand>
        <name>L-glutamine</name>
        <dbReference type="ChEBI" id="CHEBI:58359"/>
    </ligand>
</feature>
<feature type="binding site" evidence="1">
    <location>
        <position position="213"/>
    </location>
    <ligand>
        <name>L-glutamine</name>
        <dbReference type="ChEBI" id="CHEBI:58359"/>
    </ligand>
</feature>
<feature type="binding site" evidence="1">
    <location>
        <position position="232"/>
    </location>
    <ligand>
        <name>ATP</name>
        <dbReference type="ChEBI" id="CHEBI:30616"/>
    </ligand>
</feature>
<feature type="binding site" evidence="1">
    <location>
        <begin position="262"/>
        <end position="263"/>
    </location>
    <ligand>
        <name>ATP</name>
        <dbReference type="ChEBI" id="CHEBI:30616"/>
    </ligand>
</feature>
<organism>
    <name type="scientific">Ectopseudomonas mendocina (strain ymp)</name>
    <name type="common">Pseudomonas mendocina</name>
    <dbReference type="NCBI Taxonomy" id="399739"/>
    <lineage>
        <taxon>Bacteria</taxon>
        <taxon>Pseudomonadati</taxon>
        <taxon>Pseudomonadota</taxon>
        <taxon>Gammaproteobacteria</taxon>
        <taxon>Pseudomonadales</taxon>
        <taxon>Pseudomonadaceae</taxon>
        <taxon>Ectopseudomonas</taxon>
    </lineage>
</organism>
<proteinExistence type="inferred from homology"/>
<gene>
    <name evidence="1" type="primary">glnS</name>
    <name type="ordered locus">Pmen_2572</name>
</gene>